<gene>
    <name evidence="13" type="primary">ASMT1</name>
    <name evidence="12" type="synonym">ASMT</name>
    <name evidence="18" type="ordered locus">Os09g0344500</name>
    <name evidence="15" type="ordered locus">LOC_Os09g17560</name>
    <name evidence="17" type="ORF">OSJNBb0057I13.39</name>
    <name evidence="16" type="ORF">OSJNBb0085I16.5</name>
</gene>
<name>ASMT1_ORYSJ</name>
<sequence>MAQNVQENEQVMSTEDLLQAQIELYHHCLAFIKSMALRAATDLRIPDAIHCNGGAATLTDLAAHVGLHPTKLSHLRRLMRVLTLSGIFTVHDGDGEATYTLTRVSRLLLSDGVERTHGLSQMVRVFVNPVAVASQFSLHEWFTVEKAAAVSLFEVAHGCTRWEMIANDSKDGSMFNAGMVEDSSVAMDIILRKSSNVFRGINSLVDVGGGYGAVAAAVVRAFPDIKCTVLDLPHIVAKAPSNNNIQFVGGDLFEFIPAADVVLLKCILHCWQHDDCVKIMRRCKEAISARDAGGKVILIEVVVGIGSNETVPKEMQLLFDVFMMYTDGIEREEHEWKKIFLEAGFSDYKIIPVLGVRSIIEVYP</sequence>
<comment type="function">
    <text evidence="6 7 9 11">Methyltransferase which catalyzes the transfer of a methyl group onto N-acetylserotonin, producing melatonin (N-acetyl-5-methoxytryptamine).</text>
</comment>
<comment type="catalytic activity">
    <reaction evidence="6">
        <text>N-acetylserotonin + S-adenosyl-L-methionine = melatonin + S-adenosyl-L-homocysteine + H(+)</text>
        <dbReference type="Rhea" id="RHEA:15573"/>
        <dbReference type="ChEBI" id="CHEBI:15378"/>
        <dbReference type="ChEBI" id="CHEBI:16796"/>
        <dbReference type="ChEBI" id="CHEBI:17697"/>
        <dbReference type="ChEBI" id="CHEBI:57856"/>
        <dbReference type="ChEBI" id="CHEBI:59789"/>
        <dbReference type="EC" id="2.1.1.4"/>
    </reaction>
</comment>
<comment type="biophysicochemical properties">
    <kinetics>
        <KM evidence="11">222 uM for N-acetylserotonin (at 55 degrees Celsius)</KM>
        <KM evidence="7">864 uM for N-acetylserotonin (at 30 degrees Celsius)</KM>
        <Vmax evidence="11">9.0 nmol/min/mg enzyme with N-acetylserotonin as substrate (at 55 degrees Celsius)</Vmax>
        <Vmax evidence="11">13.8 pmol/min/mg enzyme with N-acetylserotonin as substrate (at 30 degrees Celsius)</Vmax>
    </kinetics>
    <phDependence>
        <text evidence="11">Optimum pH is 7.8.</text>
    </phDependence>
    <temperatureDependence>
        <text evidence="11">Optimum temperature is 55 degrees Celsius.</text>
    </temperatureDependence>
</comment>
<comment type="pathway">
    <text evidence="15">Aromatic compound metabolism; melatonin biosynthesis; melatonin from serotonin: step 1/2.</text>
</comment>
<comment type="subunit">
    <text evidence="3">Homodimer.</text>
</comment>
<comment type="subcellular location">
    <subcellularLocation>
        <location evidence="11">Cytoplasm</location>
    </subcellularLocation>
</comment>
<comment type="tissue specificity">
    <text evidence="9">Expressed in leaves, stems and flowers.</text>
</comment>
<comment type="induction">
    <text evidence="5 6 7 8 10">By senescence, abscisic acid (ABA), acifluorfen, salt and cadmium (PubMed:21210840). Induced by copper (PubMed:18676621, PubMed:21210840). Induced by butafenacil (PubMed:22998587). Induced in dark-grown etiolated shoot (PubMed:22747959). Induced by UV-C (PubMed:24035516).</text>
</comment>
<comment type="similarity">
    <text evidence="15">Belongs to the class I-like SAM-binding methyltransferase superfamily. Cation-independent O-methyltransferase family.</text>
</comment>
<accession>Q6EPG8</accession>
<dbReference type="EC" id="2.1.1.4" evidence="6"/>
<dbReference type="EMBL" id="AP005700">
    <property type="protein sequence ID" value="BAD29092.1"/>
    <property type="molecule type" value="Genomic_DNA"/>
</dbReference>
<dbReference type="EMBL" id="AP005881">
    <property type="protein sequence ID" value="BAD29452.1"/>
    <property type="molecule type" value="Genomic_DNA"/>
</dbReference>
<dbReference type="EMBL" id="AP008215">
    <property type="protein sequence ID" value="BAF24845.1"/>
    <property type="molecule type" value="Genomic_DNA"/>
</dbReference>
<dbReference type="EMBL" id="AP014965">
    <property type="protein sequence ID" value="BAT07597.1"/>
    <property type="molecule type" value="Genomic_DNA"/>
</dbReference>
<dbReference type="EMBL" id="AK072740">
    <property type="protein sequence ID" value="BAG93122.1"/>
    <property type="molecule type" value="mRNA"/>
</dbReference>
<dbReference type="RefSeq" id="XP_015610997.1">
    <property type="nucleotide sequence ID" value="XM_015755511.1"/>
</dbReference>
<dbReference type="RefSeq" id="XP_015610998.1">
    <property type="nucleotide sequence ID" value="XM_015755512.1"/>
</dbReference>
<dbReference type="SMR" id="Q6EPG8"/>
<dbReference type="FunCoup" id="Q6EPG8">
    <property type="interactions" value="285"/>
</dbReference>
<dbReference type="STRING" id="39947.Q6EPG8"/>
<dbReference type="PaxDb" id="39947-Q6EPG8"/>
<dbReference type="EnsemblPlants" id="Os09t0344500-01">
    <property type="protein sequence ID" value="Os09t0344500-01"/>
    <property type="gene ID" value="Os09g0344500"/>
</dbReference>
<dbReference type="GeneID" id="4346795"/>
<dbReference type="Gramene" id="Os09t0344500-01">
    <property type="protein sequence ID" value="Os09t0344500-01"/>
    <property type="gene ID" value="Os09g0344500"/>
</dbReference>
<dbReference type="KEGG" id="dosa:Os09g0344500"/>
<dbReference type="KEGG" id="osa:4346795"/>
<dbReference type="eggNOG" id="KOG3178">
    <property type="taxonomic scope" value="Eukaryota"/>
</dbReference>
<dbReference type="HOGENOM" id="CLU_005533_7_0_1"/>
<dbReference type="InParanoid" id="Q6EPG8"/>
<dbReference type="OMA" id="NEQVMST"/>
<dbReference type="OrthoDB" id="613486at2759"/>
<dbReference type="SABIO-RK" id="Q6EPG8"/>
<dbReference type="UniPathway" id="UPA00837">
    <property type="reaction ID" value="UER00815"/>
</dbReference>
<dbReference type="Proteomes" id="UP000000763">
    <property type="component" value="Chromosome 9"/>
</dbReference>
<dbReference type="Proteomes" id="UP000059680">
    <property type="component" value="Chromosome 9"/>
</dbReference>
<dbReference type="GO" id="GO:0005737">
    <property type="term" value="C:cytoplasm"/>
    <property type="evidence" value="ECO:0000314"/>
    <property type="project" value="UniProtKB"/>
</dbReference>
<dbReference type="GO" id="GO:0017096">
    <property type="term" value="F:acetylserotonin O-methyltransferase activity"/>
    <property type="evidence" value="ECO:0000314"/>
    <property type="project" value="UniProtKB"/>
</dbReference>
<dbReference type="GO" id="GO:0008171">
    <property type="term" value="F:O-methyltransferase activity"/>
    <property type="evidence" value="ECO:0000318"/>
    <property type="project" value="GO_Central"/>
</dbReference>
<dbReference type="GO" id="GO:0046983">
    <property type="term" value="F:protein dimerization activity"/>
    <property type="evidence" value="ECO:0007669"/>
    <property type="project" value="InterPro"/>
</dbReference>
<dbReference type="GO" id="GO:0008757">
    <property type="term" value="F:S-adenosylmethionine-dependent methyltransferase activity"/>
    <property type="evidence" value="ECO:0000318"/>
    <property type="project" value="GO_Central"/>
</dbReference>
<dbReference type="GO" id="GO:0009058">
    <property type="term" value="P:biosynthetic process"/>
    <property type="evidence" value="ECO:0000318"/>
    <property type="project" value="GO_Central"/>
</dbReference>
<dbReference type="GO" id="GO:0030187">
    <property type="term" value="P:melatonin biosynthetic process"/>
    <property type="evidence" value="ECO:0000314"/>
    <property type="project" value="UniProtKB"/>
</dbReference>
<dbReference type="GO" id="GO:0032259">
    <property type="term" value="P:methylation"/>
    <property type="evidence" value="ECO:0000318"/>
    <property type="project" value="GO_Central"/>
</dbReference>
<dbReference type="FunFam" id="1.10.10.10:FF:000292">
    <property type="entry name" value="O-methyltransferase ZRP4"/>
    <property type="match status" value="1"/>
</dbReference>
<dbReference type="FunFam" id="3.40.50.150:FF:000057">
    <property type="entry name" value="O-methyltransferase ZRP4"/>
    <property type="match status" value="1"/>
</dbReference>
<dbReference type="Gene3D" id="3.40.50.150">
    <property type="entry name" value="Vaccinia Virus protein VP39"/>
    <property type="match status" value="1"/>
</dbReference>
<dbReference type="Gene3D" id="1.10.10.10">
    <property type="entry name" value="Winged helix-like DNA-binding domain superfamily/Winged helix DNA-binding domain"/>
    <property type="match status" value="1"/>
</dbReference>
<dbReference type="InterPro" id="IPR016461">
    <property type="entry name" value="COMT-like"/>
</dbReference>
<dbReference type="InterPro" id="IPR001077">
    <property type="entry name" value="O_MeTrfase_dom"/>
</dbReference>
<dbReference type="InterPro" id="IPR012967">
    <property type="entry name" value="Plant_O-MeTrfase_dimerisation"/>
</dbReference>
<dbReference type="InterPro" id="IPR029063">
    <property type="entry name" value="SAM-dependent_MTases_sf"/>
</dbReference>
<dbReference type="InterPro" id="IPR036388">
    <property type="entry name" value="WH-like_DNA-bd_sf"/>
</dbReference>
<dbReference type="InterPro" id="IPR036390">
    <property type="entry name" value="WH_DNA-bd_sf"/>
</dbReference>
<dbReference type="PANTHER" id="PTHR11746">
    <property type="entry name" value="O-METHYLTRANSFERASE"/>
    <property type="match status" value="1"/>
</dbReference>
<dbReference type="Pfam" id="PF08100">
    <property type="entry name" value="Dimerisation"/>
    <property type="match status" value="1"/>
</dbReference>
<dbReference type="Pfam" id="PF00891">
    <property type="entry name" value="Methyltransf_2"/>
    <property type="match status" value="1"/>
</dbReference>
<dbReference type="PIRSF" id="PIRSF005739">
    <property type="entry name" value="O-mtase"/>
    <property type="match status" value="1"/>
</dbReference>
<dbReference type="SUPFAM" id="SSF53335">
    <property type="entry name" value="S-adenosyl-L-methionine-dependent methyltransferases"/>
    <property type="match status" value="1"/>
</dbReference>
<dbReference type="SUPFAM" id="SSF46785">
    <property type="entry name" value="Winged helix' DNA-binding domain"/>
    <property type="match status" value="1"/>
</dbReference>
<dbReference type="PROSITE" id="PS51683">
    <property type="entry name" value="SAM_OMT_II"/>
    <property type="match status" value="1"/>
</dbReference>
<protein>
    <recommendedName>
        <fullName evidence="15">Acetylserotonin O-methyltransferase 1</fullName>
        <shortName evidence="14">OsASMT1</shortName>
        <ecNumber evidence="6">2.1.1.4</ecNumber>
    </recommendedName>
</protein>
<evidence type="ECO:0000250" key="1">
    <source>
        <dbReference type="UniProtKB" id="F1DBB3"/>
    </source>
</evidence>
<evidence type="ECO:0000250" key="2">
    <source>
        <dbReference type="UniProtKB" id="P28002"/>
    </source>
</evidence>
<evidence type="ECO:0000250" key="3">
    <source>
        <dbReference type="UniProtKB" id="P46597"/>
    </source>
</evidence>
<evidence type="ECO:0000255" key="4">
    <source>
        <dbReference type="PROSITE-ProRule" id="PRU01020"/>
    </source>
</evidence>
<evidence type="ECO:0000269" key="5">
    <source>
    </source>
</evidence>
<evidence type="ECO:0000269" key="6">
    <source>
    </source>
</evidence>
<evidence type="ECO:0000269" key="7">
    <source>
    </source>
</evidence>
<evidence type="ECO:0000269" key="8">
    <source>
    </source>
</evidence>
<evidence type="ECO:0000269" key="9">
    <source>
    </source>
</evidence>
<evidence type="ECO:0000269" key="10">
    <source>
    </source>
</evidence>
<evidence type="ECO:0000269" key="11">
    <source>
    </source>
</evidence>
<evidence type="ECO:0000303" key="12">
    <source>
    </source>
</evidence>
<evidence type="ECO:0000303" key="13">
    <source>
    </source>
</evidence>
<evidence type="ECO:0000303" key="14">
    <source>
    </source>
</evidence>
<evidence type="ECO:0000305" key="15"/>
<evidence type="ECO:0000312" key="16">
    <source>
        <dbReference type="EMBL" id="BAD29092.1"/>
    </source>
</evidence>
<evidence type="ECO:0000312" key="17">
    <source>
        <dbReference type="EMBL" id="BAD29452.1"/>
    </source>
</evidence>
<evidence type="ECO:0000312" key="18">
    <source>
        <dbReference type="EMBL" id="BAT07597.1"/>
    </source>
</evidence>
<keyword id="KW-0963">Cytoplasm</keyword>
<keyword id="KW-0471">Melatonin biosynthesis</keyword>
<keyword id="KW-0489">Methyltransferase</keyword>
<keyword id="KW-1185">Reference proteome</keyword>
<keyword id="KW-0949">S-adenosyl-L-methionine</keyword>
<keyword id="KW-0808">Transferase</keyword>
<organism>
    <name type="scientific">Oryza sativa subsp. japonica</name>
    <name type="common">Rice</name>
    <dbReference type="NCBI Taxonomy" id="39947"/>
    <lineage>
        <taxon>Eukaryota</taxon>
        <taxon>Viridiplantae</taxon>
        <taxon>Streptophyta</taxon>
        <taxon>Embryophyta</taxon>
        <taxon>Tracheophyta</taxon>
        <taxon>Spermatophyta</taxon>
        <taxon>Magnoliopsida</taxon>
        <taxon>Liliopsida</taxon>
        <taxon>Poales</taxon>
        <taxon>Poaceae</taxon>
        <taxon>BOP clade</taxon>
        <taxon>Oryzoideae</taxon>
        <taxon>Oryzeae</taxon>
        <taxon>Oryzinae</taxon>
        <taxon>Oryza</taxon>
        <taxon>Oryza sativa</taxon>
    </lineage>
</organism>
<proteinExistence type="evidence at protein level"/>
<feature type="chain" id="PRO_0000437947" description="Acetylserotonin O-methyltransferase 1">
    <location>
        <begin position="1"/>
        <end position="364"/>
    </location>
</feature>
<feature type="active site" description="Proton acceptor" evidence="4">
    <location>
        <position position="269"/>
    </location>
</feature>
<feature type="active site" evidence="1">
    <location>
        <position position="300"/>
    </location>
</feature>
<feature type="active site" evidence="1">
    <location>
        <position position="330"/>
    </location>
</feature>
<feature type="binding site" evidence="2">
    <location>
        <position position="208"/>
    </location>
    <ligand>
        <name>S-adenosyl-L-homocysteine</name>
        <dbReference type="ChEBI" id="CHEBI:57856"/>
    </ligand>
</feature>
<feature type="binding site" evidence="2">
    <location>
        <position position="231"/>
    </location>
    <ligand>
        <name>S-adenosyl-L-homocysteine</name>
        <dbReference type="ChEBI" id="CHEBI:57856"/>
    </ligand>
</feature>
<feature type="binding site" evidence="2">
    <location>
        <position position="251"/>
    </location>
    <ligand>
        <name>S-adenosyl-L-homocysteine</name>
        <dbReference type="ChEBI" id="CHEBI:57856"/>
    </ligand>
</feature>
<feature type="binding site" evidence="2">
    <location>
        <position position="265"/>
    </location>
    <ligand>
        <name>S-adenosyl-L-homocysteine</name>
        <dbReference type="ChEBI" id="CHEBI:57856"/>
    </ligand>
</feature>
<reference key="1">
    <citation type="journal article" date="2005" name="Nature">
        <title>The map-based sequence of the rice genome.</title>
        <authorList>
            <consortium name="International rice genome sequencing project (IRGSP)"/>
        </authorList>
    </citation>
    <scope>NUCLEOTIDE SEQUENCE [LARGE SCALE GENOMIC DNA]</scope>
    <source>
        <strain>cv. Nipponbare</strain>
    </source>
</reference>
<reference key="2">
    <citation type="journal article" date="2008" name="Nucleic Acids Res.">
        <title>The rice annotation project database (RAP-DB): 2008 update.</title>
        <authorList>
            <consortium name="The rice annotation project (RAP)"/>
        </authorList>
    </citation>
    <scope>GENOME REANNOTATION</scope>
    <source>
        <strain>cv. Nipponbare</strain>
    </source>
</reference>
<reference key="3">
    <citation type="journal article" date="2013" name="Rice">
        <title>Improvement of the Oryza sativa Nipponbare reference genome using next generation sequence and optical map data.</title>
        <authorList>
            <person name="Kawahara Y."/>
            <person name="de la Bastide M."/>
            <person name="Hamilton J.P."/>
            <person name="Kanamori H."/>
            <person name="McCombie W.R."/>
            <person name="Ouyang S."/>
            <person name="Schwartz D.C."/>
            <person name="Tanaka T."/>
            <person name="Wu J."/>
            <person name="Zhou S."/>
            <person name="Childs K.L."/>
            <person name="Davidson R.M."/>
            <person name="Lin H."/>
            <person name="Quesada-Ocampo L."/>
            <person name="Vaillancourt B."/>
            <person name="Sakai H."/>
            <person name="Lee S.S."/>
            <person name="Kim J."/>
            <person name="Numa H."/>
            <person name="Itoh T."/>
            <person name="Buell C.R."/>
            <person name="Matsumoto T."/>
        </authorList>
    </citation>
    <scope>GENOME REANNOTATION</scope>
    <source>
        <strain>cv. Nipponbare</strain>
    </source>
</reference>
<reference key="4">
    <citation type="journal article" date="2003" name="Science">
        <title>Collection, mapping, and annotation of over 28,000 cDNA clones from japonica rice.</title>
        <authorList>
            <consortium name="The rice full-length cDNA consortium"/>
        </authorList>
    </citation>
    <scope>NUCLEOTIDE SEQUENCE [LARGE SCALE MRNA]</scope>
    <source>
        <strain>cv. Nipponbare</strain>
    </source>
</reference>
<reference key="5">
    <citation type="journal article" date="2008" name="J. Exp. Bot.">
        <title>Gene expression and sensitivity in response to copper stress in rice leaves.</title>
        <authorList>
            <person name="Sudo E."/>
            <person name="Itouga M."/>
            <person name="Yoshida-Hatanaka K."/>
            <person name="Ono Y."/>
            <person name="Sakakibara H."/>
        </authorList>
    </citation>
    <scope>INDUCTION BY COPPER</scope>
</reference>
<reference key="6">
    <citation type="journal article" date="2011" name="J. Pineal Res.">
        <title>Molecular cloning of a plant N-acetylserotonin methyltransferase and its expression characteristics in rice.</title>
        <authorList>
            <person name="Kang K."/>
            <person name="Kong K."/>
            <person name="Park S."/>
            <person name="Natsagdorj U."/>
            <person name="Kim Y.S."/>
            <person name="Back K."/>
        </authorList>
    </citation>
    <scope>FUNCTION</scope>
    <scope>CATALYTIC ACTIVITY</scope>
    <scope>INDUCTION</scope>
</reference>
<reference key="7">
    <citation type="journal article" date="2013" name="J. Pineal Res.">
        <title>Molecular cloning of rice serotonin N-acetyltransferase, the penultimate gene in plant melatonin biosynthesis.</title>
        <authorList>
            <person name="Kang K."/>
            <person name="Lee K."/>
            <person name="Park S."/>
            <person name="Byeon Y."/>
            <person name="Back K."/>
        </authorList>
    </citation>
    <scope>INDUCTION BY BUTAFENACIL</scope>
</reference>
<reference key="8">
    <citation type="journal article" date="2013" name="J. Pineal Res.">
        <title>Kinetic analysis of purified recombinant rice N-acetylserotonin methyltransferase and peak melatonin production in etiolated rice shoots.</title>
        <authorList>
            <person name="Park S."/>
            <person name="Byeon Y."/>
            <person name="Kim Y.S."/>
            <person name="Back K."/>
        </authorList>
    </citation>
    <scope>FUNCTION</scope>
    <scope>BIOPHYSICOCHEMICAL PROPERTIES</scope>
    <scope>INDUCTION BY DARK</scope>
</reference>
<reference key="9">
    <citation type="journal article" date="2013" name="J. Pineal Res.">
        <title>Functional analyses of three ASMT gene family members in rice plants.</title>
        <authorList>
            <person name="Park S."/>
            <person name="Byeon Y."/>
            <person name="Back K."/>
        </authorList>
    </citation>
    <scope>FUNCTION</scope>
    <scope>TISSUE SPECIFICITY</scope>
</reference>
<reference key="10">
    <citation type="journal article" date="2013" name="Phytochemistry">
        <title>Transcriptomic analysis of UV-treated rice leaves reveals UV-induced phytoalexin biosynthetic pathways and their regulatory networks in rice.</title>
        <authorList>
            <person name="Park H.L."/>
            <person name="Lee S.W."/>
            <person name="Jung K.H."/>
            <person name="Hahn T.R."/>
            <person name="Cho M.H."/>
        </authorList>
    </citation>
    <scope>INDUCTION BY UV-C</scope>
</reference>
<reference key="11">
    <citation type="journal article" date="2014" name="J. Pineal Res.">
        <title>Cellular localization and kinetics of the rice melatonin biosynthetic enzymes SNAT and ASMT.</title>
        <authorList>
            <person name="Byeon Y."/>
            <person name="Lee H.Y."/>
            <person name="Lee K."/>
            <person name="Park S."/>
            <person name="Back K."/>
        </authorList>
    </citation>
    <scope>FUNCTION</scope>
    <scope>BIOPHYSICOCHEMICAL PROPERTIES</scope>
    <scope>SUBCELLULAR LOCATION</scope>
</reference>